<evidence type="ECO:0000255" key="1">
    <source>
        <dbReference type="HAMAP-Rule" id="MF_00488"/>
    </source>
</evidence>
<evidence type="ECO:0000305" key="2"/>
<reference key="1">
    <citation type="journal article" date="2003" name="Proc. Natl. Acad. Sci. U.S.A.">
        <title>Complete genome sequence of Lactobacillus plantarum WCFS1.</title>
        <authorList>
            <person name="Kleerebezem M."/>
            <person name="Boekhorst J."/>
            <person name="van Kranenburg R."/>
            <person name="Molenaar D."/>
            <person name="Kuipers O.P."/>
            <person name="Leer R."/>
            <person name="Tarchini R."/>
            <person name="Peters S.A."/>
            <person name="Sandbrink H.M."/>
            <person name="Fiers M.W.E.J."/>
            <person name="Stiekema W."/>
            <person name="Klein Lankhorst R.M."/>
            <person name="Bron P.A."/>
            <person name="Hoffer S.M."/>
            <person name="Nierop Groot M.N."/>
            <person name="Kerkhoven R."/>
            <person name="De Vries M."/>
            <person name="Ursing B."/>
            <person name="De Vos W.M."/>
            <person name="Siezen R.J."/>
        </authorList>
    </citation>
    <scope>NUCLEOTIDE SEQUENCE [LARGE SCALE GENOMIC DNA]</scope>
    <source>
        <strain>ATCC BAA-793 / NCIMB 8826 / WCFS1</strain>
    </source>
</reference>
<reference key="2">
    <citation type="journal article" date="2012" name="J. Bacteriol.">
        <title>Complete resequencing and reannotation of the Lactobacillus plantarum WCFS1 genome.</title>
        <authorList>
            <person name="Siezen R.J."/>
            <person name="Francke C."/>
            <person name="Renckens B."/>
            <person name="Boekhorst J."/>
            <person name="Wels M."/>
            <person name="Kleerebezem M."/>
            <person name="van Hijum S.A."/>
        </authorList>
    </citation>
    <scope>NUCLEOTIDE SEQUENCE [LARGE SCALE GENOMIC DNA]</scope>
    <scope>GENOME REANNOTATION</scope>
    <source>
        <strain>ATCC BAA-793 / NCIMB 8826 / WCFS1</strain>
    </source>
</reference>
<protein>
    <recommendedName>
        <fullName evidence="1">L-lactate dehydrogenase 2</fullName>
        <shortName evidence="1">L-LDH 2</shortName>
        <ecNumber evidence="1">1.1.1.27</ecNumber>
    </recommendedName>
</protein>
<gene>
    <name evidence="1" type="primary">ldh2</name>
    <name type="synonym">ldhL2</name>
    <name type="ordered locus">lp_1101</name>
</gene>
<dbReference type="EC" id="1.1.1.27" evidence="1"/>
<dbReference type="EMBL" id="AL935263">
    <property type="protein sequence ID" value="CCC78502.1"/>
    <property type="molecule type" value="Genomic_DNA"/>
</dbReference>
<dbReference type="RefSeq" id="WP_003644108.1">
    <property type="nucleotide sequence ID" value="NC_004567.2"/>
</dbReference>
<dbReference type="RefSeq" id="YP_004889016.1">
    <property type="nucleotide sequence ID" value="NC_004567.2"/>
</dbReference>
<dbReference type="SMR" id="P59390"/>
<dbReference type="STRING" id="220668.lp_1101"/>
<dbReference type="EnsemblBacteria" id="CCC78502">
    <property type="protein sequence ID" value="CCC78502"/>
    <property type="gene ID" value="lp_1101"/>
</dbReference>
<dbReference type="KEGG" id="lpl:lp_1101"/>
<dbReference type="PATRIC" id="fig|220668.9.peg.931"/>
<dbReference type="eggNOG" id="COG0039">
    <property type="taxonomic scope" value="Bacteria"/>
</dbReference>
<dbReference type="HOGENOM" id="CLU_045401_1_1_9"/>
<dbReference type="OrthoDB" id="9802969at2"/>
<dbReference type="PhylomeDB" id="P59390"/>
<dbReference type="BRENDA" id="1.1.1.27">
    <property type="organism ID" value="2849"/>
</dbReference>
<dbReference type="UniPathway" id="UPA00554">
    <property type="reaction ID" value="UER00611"/>
</dbReference>
<dbReference type="Proteomes" id="UP000000432">
    <property type="component" value="Chromosome"/>
</dbReference>
<dbReference type="GO" id="GO:0005737">
    <property type="term" value="C:cytoplasm"/>
    <property type="evidence" value="ECO:0007669"/>
    <property type="project" value="UniProtKB-SubCell"/>
</dbReference>
<dbReference type="GO" id="GO:0004459">
    <property type="term" value="F:L-lactate dehydrogenase activity"/>
    <property type="evidence" value="ECO:0007669"/>
    <property type="project" value="UniProtKB-UniRule"/>
</dbReference>
<dbReference type="GO" id="GO:0006096">
    <property type="term" value="P:glycolytic process"/>
    <property type="evidence" value="ECO:0007669"/>
    <property type="project" value="UniProtKB-UniRule"/>
</dbReference>
<dbReference type="GO" id="GO:0006089">
    <property type="term" value="P:lactate metabolic process"/>
    <property type="evidence" value="ECO:0007669"/>
    <property type="project" value="TreeGrafter"/>
</dbReference>
<dbReference type="CDD" id="cd05291">
    <property type="entry name" value="HicDH_like"/>
    <property type="match status" value="1"/>
</dbReference>
<dbReference type="FunFam" id="3.40.50.720:FF:000018">
    <property type="entry name" value="Malate dehydrogenase"/>
    <property type="match status" value="1"/>
</dbReference>
<dbReference type="Gene3D" id="3.90.110.10">
    <property type="entry name" value="Lactate dehydrogenase/glycoside hydrolase, family 4, C-terminal"/>
    <property type="match status" value="1"/>
</dbReference>
<dbReference type="Gene3D" id="3.40.50.720">
    <property type="entry name" value="NAD(P)-binding Rossmann-like Domain"/>
    <property type="match status" value="1"/>
</dbReference>
<dbReference type="HAMAP" id="MF_00488">
    <property type="entry name" value="Lactate_dehydrog"/>
    <property type="match status" value="1"/>
</dbReference>
<dbReference type="InterPro" id="IPR001557">
    <property type="entry name" value="L-lactate/malate_DH"/>
</dbReference>
<dbReference type="InterPro" id="IPR011304">
    <property type="entry name" value="L-lactate_DH"/>
</dbReference>
<dbReference type="InterPro" id="IPR018177">
    <property type="entry name" value="L-lactate_DH_AS"/>
</dbReference>
<dbReference type="InterPro" id="IPR022383">
    <property type="entry name" value="Lactate/malate_DH_C"/>
</dbReference>
<dbReference type="InterPro" id="IPR001236">
    <property type="entry name" value="Lactate/malate_DH_N"/>
</dbReference>
<dbReference type="InterPro" id="IPR015955">
    <property type="entry name" value="Lactate_DH/Glyco_Ohase_4_C"/>
</dbReference>
<dbReference type="InterPro" id="IPR036291">
    <property type="entry name" value="NAD(P)-bd_dom_sf"/>
</dbReference>
<dbReference type="NCBIfam" id="TIGR01771">
    <property type="entry name" value="L-LDH-NAD"/>
    <property type="match status" value="1"/>
</dbReference>
<dbReference type="NCBIfam" id="NF000824">
    <property type="entry name" value="PRK00066.1"/>
    <property type="match status" value="1"/>
</dbReference>
<dbReference type="PANTHER" id="PTHR43128">
    <property type="entry name" value="L-2-HYDROXYCARBOXYLATE DEHYDROGENASE (NAD(P)(+))"/>
    <property type="match status" value="1"/>
</dbReference>
<dbReference type="PANTHER" id="PTHR43128:SF16">
    <property type="entry name" value="L-LACTATE DEHYDROGENASE"/>
    <property type="match status" value="1"/>
</dbReference>
<dbReference type="Pfam" id="PF02866">
    <property type="entry name" value="Ldh_1_C"/>
    <property type="match status" value="1"/>
</dbReference>
<dbReference type="Pfam" id="PF00056">
    <property type="entry name" value="Ldh_1_N"/>
    <property type="match status" value="1"/>
</dbReference>
<dbReference type="PIRSF" id="PIRSF000102">
    <property type="entry name" value="Lac_mal_DH"/>
    <property type="match status" value="1"/>
</dbReference>
<dbReference type="PRINTS" id="PR00086">
    <property type="entry name" value="LLDHDRGNASE"/>
</dbReference>
<dbReference type="SUPFAM" id="SSF56327">
    <property type="entry name" value="LDH C-terminal domain-like"/>
    <property type="match status" value="1"/>
</dbReference>
<dbReference type="SUPFAM" id="SSF51735">
    <property type="entry name" value="NAD(P)-binding Rossmann-fold domains"/>
    <property type="match status" value="1"/>
</dbReference>
<dbReference type="PROSITE" id="PS00064">
    <property type="entry name" value="L_LDH"/>
    <property type="match status" value="1"/>
</dbReference>
<accession>P59390</accession>
<accession>F9UMR3</accession>
<comment type="function">
    <text evidence="1">Catalyzes the conversion of lactate to pyruvate.</text>
</comment>
<comment type="catalytic activity">
    <reaction evidence="1">
        <text>(S)-lactate + NAD(+) = pyruvate + NADH + H(+)</text>
        <dbReference type="Rhea" id="RHEA:23444"/>
        <dbReference type="ChEBI" id="CHEBI:15361"/>
        <dbReference type="ChEBI" id="CHEBI:15378"/>
        <dbReference type="ChEBI" id="CHEBI:16651"/>
        <dbReference type="ChEBI" id="CHEBI:57540"/>
        <dbReference type="ChEBI" id="CHEBI:57945"/>
        <dbReference type="EC" id="1.1.1.27"/>
    </reaction>
</comment>
<comment type="pathway">
    <text evidence="1">Fermentation; pyruvate fermentation to lactate; (S)-lactate from pyruvate: step 1/1.</text>
</comment>
<comment type="subunit">
    <text evidence="1">Homotetramer.</text>
</comment>
<comment type="subcellular location">
    <subcellularLocation>
        <location evidence="1">Cytoplasm</location>
    </subcellularLocation>
</comment>
<comment type="similarity">
    <text evidence="1 2">Belongs to the LDH/MDH superfamily. LDH family.</text>
</comment>
<organism>
    <name type="scientific">Lactiplantibacillus plantarum (strain ATCC BAA-793 / NCIMB 8826 / WCFS1)</name>
    <name type="common">Lactobacillus plantarum</name>
    <dbReference type="NCBI Taxonomy" id="220668"/>
    <lineage>
        <taxon>Bacteria</taxon>
        <taxon>Bacillati</taxon>
        <taxon>Bacillota</taxon>
        <taxon>Bacilli</taxon>
        <taxon>Lactobacillales</taxon>
        <taxon>Lactobacillaceae</taxon>
        <taxon>Lactiplantibacillus</taxon>
    </lineage>
</organism>
<feature type="chain" id="PRO_0000168358" description="L-lactate dehydrogenase 2">
    <location>
        <begin position="1"/>
        <end position="309"/>
    </location>
</feature>
<feature type="active site" description="Proton acceptor" evidence="1">
    <location>
        <position position="177"/>
    </location>
</feature>
<feature type="binding site" evidence="1">
    <location>
        <position position="16"/>
    </location>
    <ligand>
        <name>NAD(+)</name>
        <dbReference type="ChEBI" id="CHEBI:57540"/>
    </ligand>
</feature>
<feature type="binding site" evidence="1">
    <location>
        <position position="37"/>
    </location>
    <ligand>
        <name>NAD(+)</name>
        <dbReference type="ChEBI" id="CHEBI:57540"/>
    </ligand>
</feature>
<feature type="binding site" evidence="1">
    <location>
        <position position="67"/>
    </location>
    <ligand>
        <name>NAD(+)</name>
        <dbReference type="ChEBI" id="CHEBI:57540"/>
    </ligand>
</feature>
<feature type="binding site" evidence="1">
    <location>
        <begin position="81"/>
        <end position="82"/>
    </location>
    <ligand>
        <name>NAD(+)</name>
        <dbReference type="ChEBI" id="CHEBI:57540"/>
    </ligand>
</feature>
<feature type="binding site" evidence="1">
    <location>
        <position position="90"/>
    </location>
    <ligand>
        <name>substrate</name>
    </ligand>
</feature>
<feature type="binding site" evidence="1">
    <location>
        <position position="103"/>
    </location>
    <ligand>
        <name>NAD(+)</name>
        <dbReference type="ChEBI" id="CHEBI:57540"/>
    </ligand>
</feature>
<feature type="binding site" evidence="1">
    <location>
        <begin position="122"/>
        <end position="125"/>
    </location>
    <ligand>
        <name>substrate</name>
    </ligand>
</feature>
<feature type="binding site" evidence="1">
    <location>
        <position position="145"/>
    </location>
    <ligand>
        <name>NAD(+)</name>
        <dbReference type="ChEBI" id="CHEBI:57540"/>
    </ligand>
</feature>
<feature type="binding site" evidence="1">
    <location>
        <begin position="150"/>
        <end position="153"/>
    </location>
    <ligand>
        <name>substrate</name>
    </ligand>
</feature>
<feature type="binding site" evidence="1">
    <location>
        <position position="227"/>
    </location>
    <ligand>
        <name>substrate</name>
    </ligand>
</feature>
<name>LDH2_LACPL</name>
<keyword id="KW-0963">Cytoplasm</keyword>
<keyword id="KW-0520">NAD</keyword>
<keyword id="KW-0560">Oxidoreductase</keyword>
<keyword id="KW-1185">Reference proteome</keyword>
<proteinExistence type="inferred from homology"/>
<sequence length="309" mass="33116">MDKKQRKVVIVGDGSVGSSFAFSLVQNCALDELVIVDLVKTHAEGDVKDLEDVAAFTNATNIHTGEYADARDADIVVITAGVPRKPGESRLDLINRNTKILESIVKPVVASGFNGCFVISSNPVDILTSMTQRLSGFPRHRVIGTGTSLDTARLRVALAQKLNVATTAVDAAVLGEHGDSSIVNFDEIMINAQPLKTVTTVDDQFKAEIEQAVRGKGGQIISQKGATFYGVAVSLMQICRAILNDENAELIVSAALSGQYGINDLYLGSPAIINRNGLQKVIEAELSDDERARMQHFAAKMLTMMNVAS</sequence>